<accession>B7N8V8</accession>
<organism>
    <name type="scientific">Escherichia coli O17:K52:H18 (strain UMN026 / ExPEC)</name>
    <dbReference type="NCBI Taxonomy" id="585056"/>
    <lineage>
        <taxon>Bacteria</taxon>
        <taxon>Pseudomonadati</taxon>
        <taxon>Pseudomonadota</taxon>
        <taxon>Gammaproteobacteria</taxon>
        <taxon>Enterobacterales</taxon>
        <taxon>Enterobacteriaceae</taxon>
        <taxon>Escherichia</taxon>
    </lineage>
</organism>
<keyword id="KW-0328">Glycosyltransferase</keyword>
<keyword id="KW-0479">Metal-binding</keyword>
<keyword id="KW-0671">Queuosine biosynthesis</keyword>
<keyword id="KW-0808">Transferase</keyword>
<keyword id="KW-0819">tRNA processing</keyword>
<keyword id="KW-0862">Zinc</keyword>
<proteinExistence type="inferred from homology"/>
<name>TGT_ECOLU</name>
<comment type="function">
    <text evidence="1">Catalyzes the base-exchange of a guanine (G) residue with the queuine precursor 7-aminomethyl-7-deazaguanine (PreQ1) at position 34 (anticodon wobble position) in tRNAs with GU(N) anticodons (tRNA-Asp, -Asn, -His and -Tyr). Catalysis occurs through a double-displacement mechanism. The nucleophile active site attacks the C1' of nucleotide 34 to detach the guanine base from the RNA, forming a covalent enzyme-RNA intermediate. The proton acceptor active site deprotonates the incoming PreQ1, allowing a nucleophilic attack on the C1' of the ribose to form the product. After dissociation, two additional enzymatic reactions on the tRNA convert PreQ1 to queuine (Q), resulting in the hypermodified nucleoside queuosine (7-(((4,5-cis-dihydroxy-2-cyclopenten-1-yl)amino)methyl)-7-deazaguanosine).</text>
</comment>
<comment type="catalytic activity">
    <reaction evidence="1">
        <text>7-aminomethyl-7-carbaguanine + guanosine(34) in tRNA = 7-aminomethyl-7-carbaguanosine(34) in tRNA + guanine</text>
        <dbReference type="Rhea" id="RHEA:24104"/>
        <dbReference type="Rhea" id="RHEA-COMP:10341"/>
        <dbReference type="Rhea" id="RHEA-COMP:10342"/>
        <dbReference type="ChEBI" id="CHEBI:16235"/>
        <dbReference type="ChEBI" id="CHEBI:58703"/>
        <dbReference type="ChEBI" id="CHEBI:74269"/>
        <dbReference type="ChEBI" id="CHEBI:82833"/>
        <dbReference type="EC" id="2.4.2.29"/>
    </reaction>
</comment>
<comment type="cofactor">
    <cofactor evidence="1">
        <name>Zn(2+)</name>
        <dbReference type="ChEBI" id="CHEBI:29105"/>
    </cofactor>
    <text evidence="1">Binds 1 zinc ion per subunit.</text>
</comment>
<comment type="pathway">
    <text evidence="1">tRNA modification; tRNA-queuosine biosynthesis.</text>
</comment>
<comment type="subunit">
    <text evidence="1">Homodimer. Within each dimer, one monomer is responsible for RNA recognition and catalysis, while the other monomer binds to the replacement base PreQ1.</text>
</comment>
<comment type="similarity">
    <text evidence="1">Belongs to the queuine tRNA-ribosyltransferase family.</text>
</comment>
<dbReference type="EC" id="2.4.2.29" evidence="1"/>
<dbReference type="EMBL" id="CU928163">
    <property type="protein sequence ID" value="CAR11659.1"/>
    <property type="molecule type" value="Genomic_DNA"/>
</dbReference>
<dbReference type="RefSeq" id="WP_000667319.1">
    <property type="nucleotide sequence ID" value="NC_011751.1"/>
</dbReference>
<dbReference type="RefSeq" id="YP_002411207.1">
    <property type="nucleotide sequence ID" value="NC_011751.1"/>
</dbReference>
<dbReference type="SMR" id="B7N8V8"/>
<dbReference type="STRING" id="585056.ECUMN_0444"/>
<dbReference type="GeneID" id="93777054"/>
<dbReference type="KEGG" id="eum:ECUMN_0444"/>
<dbReference type="PATRIC" id="fig|585056.7.peg.647"/>
<dbReference type="HOGENOM" id="CLU_022060_0_1_6"/>
<dbReference type="UniPathway" id="UPA00392"/>
<dbReference type="Proteomes" id="UP000007097">
    <property type="component" value="Chromosome"/>
</dbReference>
<dbReference type="GO" id="GO:0005829">
    <property type="term" value="C:cytosol"/>
    <property type="evidence" value="ECO:0007669"/>
    <property type="project" value="TreeGrafter"/>
</dbReference>
<dbReference type="GO" id="GO:0046872">
    <property type="term" value="F:metal ion binding"/>
    <property type="evidence" value="ECO:0007669"/>
    <property type="project" value="UniProtKB-KW"/>
</dbReference>
<dbReference type="GO" id="GO:0008479">
    <property type="term" value="F:tRNA-guanosine(34) queuine transglycosylase activity"/>
    <property type="evidence" value="ECO:0007669"/>
    <property type="project" value="UniProtKB-UniRule"/>
</dbReference>
<dbReference type="GO" id="GO:0008616">
    <property type="term" value="P:queuosine biosynthetic process"/>
    <property type="evidence" value="ECO:0007669"/>
    <property type="project" value="UniProtKB-UniRule"/>
</dbReference>
<dbReference type="GO" id="GO:0002099">
    <property type="term" value="P:tRNA wobble guanine modification"/>
    <property type="evidence" value="ECO:0007669"/>
    <property type="project" value="TreeGrafter"/>
</dbReference>
<dbReference type="GO" id="GO:0101030">
    <property type="term" value="P:tRNA-guanine transglycosylation"/>
    <property type="evidence" value="ECO:0007669"/>
    <property type="project" value="InterPro"/>
</dbReference>
<dbReference type="FunFam" id="3.20.20.105:FF:000001">
    <property type="entry name" value="Queuine tRNA-ribosyltransferase"/>
    <property type="match status" value="1"/>
</dbReference>
<dbReference type="Gene3D" id="3.20.20.105">
    <property type="entry name" value="Queuine tRNA-ribosyltransferase-like"/>
    <property type="match status" value="1"/>
</dbReference>
<dbReference type="HAMAP" id="MF_00168">
    <property type="entry name" value="Q_tRNA_Tgt"/>
    <property type="match status" value="1"/>
</dbReference>
<dbReference type="InterPro" id="IPR050076">
    <property type="entry name" value="ArchSynthase1/Queuine_TRR"/>
</dbReference>
<dbReference type="InterPro" id="IPR004803">
    <property type="entry name" value="TGT"/>
</dbReference>
<dbReference type="InterPro" id="IPR036511">
    <property type="entry name" value="TGT-like_sf"/>
</dbReference>
<dbReference type="InterPro" id="IPR002616">
    <property type="entry name" value="tRNA_ribo_trans-like"/>
</dbReference>
<dbReference type="NCBIfam" id="TIGR00430">
    <property type="entry name" value="Q_tRNA_tgt"/>
    <property type="match status" value="1"/>
</dbReference>
<dbReference type="NCBIfam" id="TIGR00449">
    <property type="entry name" value="tgt_general"/>
    <property type="match status" value="1"/>
</dbReference>
<dbReference type="PANTHER" id="PTHR46499">
    <property type="entry name" value="QUEUINE TRNA-RIBOSYLTRANSFERASE"/>
    <property type="match status" value="1"/>
</dbReference>
<dbReference type="PANTHER" id="PTHR46499:SF1">
    <property type="entry name" value="QUEUINE TRNA-RIBOSYLTRANSFERASE"/>
    <property type="match status" value="1"/>
</dbReference>
<dbReference type="Pfam" id="PF01702">
    <property type="entry name" value="TGT"/>
    <property type="match status" value="1"/>
</dbReference>
<dbReference type="SUPFAM" id="SSF51713">
    <property type="entry name" value="tRNA-guanine transglycosylase"/>
    <property type="match status" value="1"/>
</dbReference>
<feature type="chain" id="PRO_1000198003" description="Queuine tRNA-ribosyltransferase">
    <location>
        <begin position="1"/>
        <end position="375"/>
    </location>
</feature>
<feature type="region of interest" description="RNA binding" evidence="1">
    <location>
        <begin position="245"/>
        <end position="251"/>
    </location>
</feature>
<feature type="region of interest" description="RNA binding; important for wobble base 34 recognition" evidence="1">
    <location>
        <begin position="269"/>
        <end position="273"/>
    </location>
</feature>
<feature type="active site" description="Proton acceptor" evidence="1">
    <location>
        <position position="89"/>
    </location>
</feature>
<feature type="active site" description="Nucleophile" evidence="1">
    <location>
        <position position="264"/>
    </location>
</feature>
<feature type="binding site" evidence="1">
    <location>
        <begin position="89"/>
        <end position="93"/>
    </location>
    <ligand>
        <name>substrate</name>
    </ligand>
</feature>
<feature type="binding site" evidence="1">
    <location>
        <position position="143"/>
    </location>
    <ligand>
        <name>substrate</name>
    </ligand>
</feature>
<feature type="binding site" evidence="1">
    <location>
        <position position="187"/>
    </location>
    <ligand>
        <name>substrate</name>
    </ligand>
</feature>
<feature type="binding site" evidence="1">
    <location>
        <position position="214"/>
    </location>
    <ligand>
        <name>substrate</name>
    </ligand>
</feature>
<feature type="binding site" evidence="1">
    <location>
        <position position="302"/>
    </location>
    <ligand>
        <name>Zn(2+)</name>
        <dbReference type="ChEBI" id="CHEBI:29105"/>
    </ligand>
</feature>
<feature type="binding site" evidence="1">
    <location>
        <position position="304"/>
    </location>
    <ligand>
        <name>Zn(2+)</name>
        <dbReference type="ChEBI" id="CHEBI:29105"/>
    </ligand>
</feature>
<feature type="binding site" evidence="1">
    <location>
        <position position="307"/>
    </location>
    <ligand>
        <name>Zn(2+)</name>
        <dbReference type="ChEBI" id="CHEBI:29105"/>
    </ligand>
</feature>
<feature type="binding site" evidence="1">
    <location>
        <position position="333"/>
    </location>
    <ligand>
        <name>Zn(2+)</name>
        <dbReference type="ChEBI" id="CHEBI:29105"/>
    </ligand>
</feature>
<evidence type="ECO:0000255" key="1">
    <source>
        <dbReference type="HAMAP-Rule" id="MF_00168"/>
    </source>
</evidence>
<sequence>MKFELDTTDGRARRGRLVFDRGVVETPCFMPVGTYGTVKGMTPEEVEATGAQIILGNTFHLWLRPGQEIMKLHGDLHDFMQWKGPILTDSGGFQVFSLGDIRKITEQGVHFRNPINGDPIFLDPEKSMEIQYDLGSDIVMIFDECTPYPADWDYAKRSMEMSLRWAKRSRERFDSLGNKNALFGIIQGSVYEDLRDISVKGLVDIGFDGYAVGGLAVGEPKADMHRILEHVCPQIPADKPRYLMGVGKPEDLVEGVRRGIDMFDCVMPTRNARNGHLFVTDGVVKIRNAKYKSDTGPLDPECDCYTCRNYSRAYLHHLDRCNEILGARLNTIHNLRYYQRLMAGLRKAIEEGKLESFVTDFYQRQGREVPPLNVD</sequence>
<reference key="1">
    <citation type="journal article" date="2009" name="PLoS Genet.">
        <title>Organised genome dynamics in the Escherichia coli species results in highly diverse adaptive paths.</title>
        <authorList>
            <person name="Touchon M."/>
            <person name="Hoede C."/>
            <person name="Tenaillon O."/>
            <person name="Barbe V."/>
            <person name="Baeriswyl S."/>
            <person name="Bidet P."/>
            <person name="Bingen E."/>
            <person name="Bonacorsi S."/>
            <person name="Bouchier C."/>
            <person name="Bouvet O."/>
            <person name="Calteau A."/>
            <person name="Chiapello H."/>
            <person name="Clermont O."/>
            <person name="Cruveiller S."/>
            <person name="Danchin A."/>
            <person name="Diard M."/>
            <person name="Dossat C."/>
            <person name="Karoui M.E."/>
            <person name="Frapy E."/>
            <person name="Garry L."/>
            <person name="Ghigo J.M."/>
            <person name="Gilles A.M."/>
            <person name="Johnson J."/>
            <person name="Le Bouguenec C."/>
            <person name="Lescat M."/>
            <person name="Mangenot S."/>
            <person name="Martinez-Jehanne V."/>
            <person name="Matic I."/>
            <person name="Nassif X."/>
            <person name="Oztas S."/>
            <person name="Petit M.A."/>
            <person name="Pichon C."/>
            <person name="Rouy Z."/>
            <person name="Ruf C.S."/>
            <person name="Schneider D."/>
            <person name="Tourret J."/>
            <person name="Vacherie B."/>
            <person name="Vallenet D."/>
            <person name="Medigue C."/>
            <person name="Rocha E.P.C."/>
            <person name="Denamur E."/>
        </authorList>
    </citation>
    <scope>NUCLEOTIDE SEQUENCE [LARGE SCALE GENOMIC DNA]</scope>
    <source>
        <strain>UMN026 / ExPEC</strain>
    </source>
</reference>
<protein>
    <recommendedName>
        <fullName evidence="1">Queuine tRNA-ribosyltransferase</fullName>
        <ecNumber evidence="1">2.4.2.29</ecNumber>
    </recommendedName>
    <alternativeName>
        <fullName evidence="1">Guanine insertion enzyme</fullName>
    </alternativeName>
    <alternativeName>
        <fullName evidence="1">tRNA-guanine transglycosylase</fullName>
    </alternativeName>
</protein>
<gene>
    <name evidence="1" type="primary">tgt</name>
    <name type="ordered locus">ECUMN_0444</name>
</gene>